<sequence length="295" mass="32935">MTKLIVICGATATGKSGLALNLAMRLGSVILSADSRQVYREFDIGTAKPTLAEQRAVPHYLIDICAPRETMTVADYQEQAQALINSLPVSPLLLVGGTGLYIRSIVQGMKIPRVAPNYELRSQLASLGQTTLYGILQQVDPIAAQKIHPNDPVRTLRAVEVFYITGIPISAQQGENPPDYPILQIGLDCEMERLTERIHKRTEQMITDGLVGEVEYLCQKYGAELPLLNTLGYQEIKQYLTGEISLEAAKELTVLHTRQFAKRQRTWFRASPQIEWFNADHPDLLDIVCQHIQQP</sequence>
<reference key="1">
    <citation type="journal article" date="2001" name="DNA Res.">
        <title>Complete genomic sequence of the filamentous nitrogen-fixing cyanobacterium Anabaena sp. strain PCC 7120.</title>
        <authorList>
            <person name="Kaneko T."/>
            <person name="Nakamura Y."/>
            <person name="Wolk C.P."/>
            <person name="Kuritz T."/>
            <person name="Sasamoto S."/>
            <person name="Watanabe A."/>
            <person name="Iriguchi M."/>
            <person name="Ishikawa A."/>
            <person name="Kawashima K."/>
            <person name="Kimura T."/>
            <person name="Kishida Y."/>
            <person name="Kohara M."/>
            <person name="Matsumoto M."/>
            <person name="Matsuno A."/>
            <person name="Muraki A."/>
            <person name="Nakazaki N."/>
            <person name="Shimpo S."/>
            <person name="Sugimoto M."/>
            <person name="Takazawa M."/>
            <person name="Yamada M."/>
            <person name="Yasuda M."/>
            <person name="Tabata S."/>
        </authorList>
    </citation>
    <scope>NUCLEOTIDE SEQUENCE [LARGE SCALE GENOMIC DNA]</scope>
    <source>
        <strain>PCC 7120 / SAG 25.82 / UTEX 2576</strain>
    </source>
</reference>
<name>MIAA_NOSS1</name>
<comment type="function">
    <text evidence="1">Catalyzes the transfer of a dimethylallyl group onto the adenine at position 37 in tRNAs that read codons beginning with uridine, leading to the formation of N6-(dimethylallyl)adenosine (i(6)A).</text>
</comment>
<comment type="catalytic activity">
    <reaction evidence="1">
        <text>adenosine(37) in tRNA + dimethylallyl diphosphate = N(6)-dimethylallyladenosine(37) in tRNA + diphosphate</text>
        <dbReference type="Rhea" id="RHEA:26482"/>
        <dbReference type="Rhea" id="RHEA-COMP:10162"/>
        <dbReference type="Rhea" id="RHEA-COMP:10375"/>
        <dbReference type="ChEBI" id="CHEBI:33019"/>
        <dbReference type="ChEBI" id="CHEBI:57623"/>
        <dbReference type="ChEBI" id="CHEBI:74411"/>
        <dbReference type="ChEBI" id="CHEBI:74415"/>
        <dbReference type="EC" id="2.5.1.75"/>
    </reaction>
</comment>
<comment type="cofactor">
    <cofactor evidence="1">
        <name>Mg(2+)</name>
        <dbReference type="ChEBI" id="CHEBI:18420"/>
    </cofactor>
</comment>
<comment type="subunit">
    <text evidence="1">Monomer.</text>
</comment>
<comment type="similarity">
    <text evidence="1">Belongs to the IPP transferase family.</text>
</comment>
<proteinExistence type="inferred from homology"/>
<evidence type="ECO:0000255" key="1">
    <source>
        <dbReference type="HAMAP-Rule" id="MF_00185"/>
    </source>
</evidence>
<protein>
    <recommendedName>
        <fullName evidence="1">tRNA dimethylallyltransferase</fullName>
        <ecNumber evidence="1">2.5.1.75</ecNumber>
    </recommendedName>
    <alternativeName>
        <fullName evidence="1">Dimethylallyl diphosphate:tRNA dimethylallyltransferase</fullName>
        <shortName evidence="1">DMAPP:tRNA dimethylallyltransferase</shortName>
        <shortName evidence="1">DMATase</shortName>
    </alternativeName>
    <alternativeName>
        <fullName evidence="1">Isopentenyl-diphosphate:tRNA isopentenyltransferase</fullName>
        <shortName evidence="1">IPP transferase</shortName>
        <shortName evidence="1">IPPT</shortName>
        <shortName evidence="1">IPTase</shortName>
    </alternativeName>
</protein>
<gene>
    <name evidence="1" type="primary">miaA</name>
    <name type="ordered locus">alr5266</name>
</gene>
<keyword id="KW-0067">ATP-binding</keyword>
<keyword id="KW-0460">Magnesium</keyword>
<keyword id="KW-0547">Nucleotide-binding</keyword>
<keyword id="KW-1185">Reference proteome</keyword>
<keyword id="KW-0808">Transferase</keyword>
<keyword id="KW-0819">tRNA processing</keyword>
<accession>Q8YLN2</accession>
<dbReference type="EC" id="2.5.1.75" evidence="1"/>
<dbReference type="EMBL" id="BA000019">
    <property type="protein sequence ID" value="BAB76965.1"/>
    <property type="molecule type" value="Genomic_DNA"/>
</dbReference>
<dbReference type="PIR" id="AB2464">
    <property type="entry name" value="AB2464"/>
</dbReference>
<dbReference type="RefSeq" id="WP_010999390.1">
    <property type="nucleotide sequence ID" value="NZ_RSCN01000005.1"/>
</dbReference>
<dbReference type="SMR" id="Q8YLN2"/>
<dbReference type="STRING" id="103690.gene:10497325"/>
<dbReference type="KEGG" id="ana:alr5266"/>
<dbReference type="eggNOG" id="COG0324">
    <property type="taxonomic scope" value="Bacteria"/>
</dbReference>
<dbReference type="OrthoDB" id="9776390at2"/>
<dbReference type="BRENDA" id="2.5.1.75">
    <property type="organism ID" value="8113"/>
</dbReference>
<dbReference type="Proteomes" id="UP000002483">
    <property type="component" value="Chromosome"/>
</dbReference>
<dbReference type="GO" id="GO:0005524">
    <property type="term" value="F:ATP binding"/>
    <property type="evidence" value="ECO:0007669"/>
    <property type="project" value="UniProtKB-UniRule"/>
</dbReference>
<dbReference type="GO" id="GO:0052381">
    <property type="term" value="F:tRNA dimethylallyltransferase activity"/>
    <property type="evidence" value="ECO:0007669"/>
    <property type="project" value="UniProtKB-UniRule"/>
</dbReference>
<dbReference type="GO" id="GO:0006400">
    <property type="term" value="P:tRNA modification"/>
    <property type="evidence" value="ECO:0007669"/>
    <property type="project" value="TreeGrafter"/>
</dbReference>
<dbReference type="Gene3D" id="1.10.20.140">
    <property type="match status" value="1"/>
</dbReference>
<dbReference type="Gene3D" id="3.40.50.300">
    <property type="entry name" value="P-loop containing nucleotide triphosphate hydrolases"/>
    <property type="match status" value="1"/>
</dbReference>
<dbReference type="HAMAP" id="MF_00185">
    <property type="entry name" value="IPP_trans"/>
    <property type="match status" value="1"/>
</dbReference>
<dbReference type="InterPro" id="IPR039657">
    <property type="entry name" value="Dimethylallyltransferase"/>
</dbReference>
<dbReference type="InterPro" id="IPR018022">
    <property type="entry name" value="IPT"/>
</dbReference>
<dbReference type="InterPro" id="IPR027417">
    <property type="entry name" value="P-loop_NTPase"/>
</dbReference>
<dbReference type="NCBIfam" id="TIGR00174">
    <property type="entry name" value="miaA"/>
    <property type="match status" value="1"/>
</dbReference>
<dbReference type="PANTHER" id="PTHR11088">
    <property type="entry name" value="TRNA DIMETHYLALLYLTRANSFERASE"/>
    <property type="match status" value="1"/>
</dbReference>
<dbReference type="PANTHER" id="PTHR11088:SF60">
    <property type="entry name" value="TRNA DIMETHYLALLYLTRANSFERASE"/>
    <property type="match status" value="1"/>
</dbReference>
<dbReference type="Pfam" id="PF01715">
    <property type="entry name" value="IPPT"/>
    <property type="match status" value="1"/>
</dbReference>
<dbReference type="SUPFAM" id="SSF52540">
    <property type="entry name" value="P-loop containing nucleoside triphosphate hydrolases"/>
    <property type="match status" value="2"/>
</dbReference>
<feature type="chain" id="PRO_0000163866" description="tRNA dimethylallyltransferase">
    <location>
        <begin position="1"/>
        <end position="295"/>
    </location>
</feature>
<feature type="region of interest" description="Interaction with substrate tRNA" evidence="1">
    <location>
        <begin position="34"/>
        <end position="37"/>
    </location>
</feature>
<feature type="binding site" evidence="1">
    <location>
        <begin position="9"/>
        <end position="16"/>
    </location>
    <ligand>
        <name>ATP</name>
        <dbReference type="ChEBI" id="CHEBI:30616"/>
    </ligand>
</feature>
<feature type="binding site" evidence="1">
    <location>
        <begin position="11"/>
        <end position="16"/>
    </location>
    <ligand>
        <name>substrate</name>
    </ligand>
</feature>
<feature type="site" description="Interaction with substrate tRNA" evidence="1">
    <location>
        <position position="98"/>
    </location>
</feature>
<organism>
    <name type="scientific">Nostoc sp. (strain PCC 7120 / SAG 25.82 / UTEX 2576)</name>
    <dbReference type="NCBI Taxonomy" id="103690"/>
    <lineage>
        <taxon>Bacteria</taxon>
        <taxon>Bacillati</taxon>
        <taxon>Cyanobacteriota</taxon>
        <taxon>Cyanophyceae</taxon>
        <taxon>Nostocales</taxon>
        <taxon>Nostocaceae</taxon>
        <taxon>Nostoc</taxon>
    </lineage>
</organism>